<keyword id="KW-0663">Pyridoxal phosphate</keyword>
<keyword id="KW-1185">Reference proteome</keyword>
<dbReference type="EMBL" id="AK029518">
    <property type="protein sequence ID" value="BAC26489.1"/>
    <property type="molecule type" value="mRNA"/>
</dbReference>
<dbReference type="EMBL" id="AK083895">
    <property type="protein sequence ID" value="BAC39051.1"/>
    <property type="molecule type" value="mRNA"/>
</dbReference>
<dbReference type="CCDS" id="CCDS15720.1"/>
<dbReference type="RefSeq" id="NP_001001297.1">
    <property type="nucleotide sequence ID" value="NM_001001297.2"/>
</dbReference>
<dbReference type="RefSeq" id="NP_808256.1">
    <property type="nucleotide sequence ID" value="NM_177588.2"/>
</dbReference>
<dbReference type="RefSeq" id="XP_006497494.1">
    <property type="nucleotide sequence ID" value="XM_006497431.5"/>
</dbReference>
<dbReference type="RefSeq" id="XP_006497495.1">
    <property type="nucleotide sequence ID" value="XM_006497432.5"/>
</dbReference>
<dbReference type="RefSeq" id="XP_006497496.1">
    <property type="nucleotide sequence ID" value="XM_006497433.4"/>
</dbReference>
<dbReference type="SMR" id="Q8BH55"/>
<dbReference type="FunCoup" id="Q8BH55">
    <property type="interactions" value="441"/>
</dbReference>
<dbReference type="STRING" id="10090.ENSMUSP00000052452"/>
<dbReference type="iPTMnet" id="Q8BH55"/>
<dbReference type="PhosphoSitePlus" id="Q8BH55"/>
<dbReference type="SwissPalm" id="Q8BH55"/>
<dbReference type="PaxDb" id="10090-ENSMUSP00000052452"/>
<dbReference type="ProteomicsDB" id="259384"/>
<dbReference type="Pumba" id="Q8BH55"/>
<dbReference type="Antibodypedia" id="25872">
    <property type="antibodies" value="94 antibodies from 20 providers"/>
</dbReference>
<dbReference type="DNASU" id="208967"/>
<dbReference type="Ensembl" id="ENSMUST00000054591.10">
    <property type="protein sequence ID" value="ENSMUSP00000052452.4"/>
    <property type="gene ID" value="ENSMUSG00000048550.18"/>
</dbReference>
<dbReference type="GeneID" id="208967"/>
<dbReference type="KEGG" id="mmu:208967"/>
<dbReference type="UCSC" id="uc008inb.1">
    <property type="organism name" value="mouse"/>
</dbReference>
<dbReference type="AGR" id="MGI:2139347"/>
<dbReference type="CTD" id="79896"/>
<dbReference type="MGI" id="MGI:2139347">
    <property type="gene designation" value="Thnsl1"/>
</dbReference>
<dbReference type="VEuPathDB" id="HostDB:ENSMUSG00000048550"/>
<dbReference type="eggNOG" id="KOG2616">
    <property type="taxonomic scope" value="Eukaryota"/>
</dbReference>
<dbReference type="GeneTree" id="ENSGT00940000161144"/>
<dbReference type="HOGENOM" id="CLU_015170_3_2_1"/>
<dbReference type="InParanoid" id="Q8BH55"/>
<dbReference type="OMA" id="HFNRCQH"/>
<dbReference type="OrthoDB" id="5203861at2759"/>
<dbReference type="PhylomeDB" id="Q8BH55"/>
<dbReference type="TreeFam" id="TF329641"/>
<dbReference type="BioGRID-ORCS" id="208967">
    <property type="hits" value="4 hits in 77 CRISPR screens"/>
</dbReference>
<dbReference type="PRO" id="PR:Q8BH55"/>
<dbReference type="Proteomes" id="UP000000589">
    <property type="component" value="Chromosome 2"/>
</dbReference>
<dbReference type="RNAct" id="Q8BH55">
    <property type="molecule type" value="protein"/>
</dbReference>
<dbReference type="Bgee" id="ENSMUSG00000048550">
    <property type="expression patterns" value="Expressed in spermatid and 219 other cell types or tissues"/>
</dbReference>
<dbReference type="ExpressionAtlas" id="Q8BH55">
    <property type="expression patterns" value="baseline and differential"/>
</dbReference>
<dbReference type="CDD" id="cd00464">
    <property type="entry name" value="SK"/>
    <property type="match status" value="1"/>
</dbReference>
<dbReference type="CDD" id="cd01560">
    <property type="entry name" value="Thr-synth_2"/>
    <property type="match status" value="1"/>
</dbReference>
<dbReference type="Gene3D" id="3.40.50.1100">
    <property type="match status" value="2"/>
</dbReference>
<dbReference type="Gene3D" id="3.40.50.300">
    <property type="entry name" value="P-loop containing nucleotide triphosphate hydrolases"/>
    <property type="match status" value="1"/>
</dbReference>
<dbReference type="Gene3D" id="3.90.1380.10">
    <property type="entry name" value="Threonine synthase, N-terminal domain"/>
    <property type="match status" value="1"/>
</dbReference>
<dbReference type="HAMAP" id="MF_00109">
    <property type="entry name" value="Shikimate_kinase"/>
    <property type="match status" value="1"/>
</dbReference>
<dbReference type="InterPro" id="IPR027417">
    <property type="entry name" value="P-loop_NTPase"/>
</dbReference>
<dbReference type="InterPro" id="IPR031322">
    <property type="entry name" value="Shikimate/glucono_kinase"/>
</dbReference>
<dbReference type="InterPro" id="IPR000623">
    <property type="entry name" value="Shikimate_kinase/TSH1"/>
</dbReference>
<dbReference type="InterPro" id="IPR029144">
    <property type="entry name" value="Thr_synth_N"/>
</dbReference>
<dbReference type="InterPro" id="IPR037158">
    <property type="entry name" value="Thr_synth_N_sf"/>
</dbReference>
<dbReference type="InterPro" id="IPR004450">
    <property type="entry name" value="Thr_synthase-like"/>
</dbReference>
<dbReference type="InterPro" id="IPR036052">
    <property type="entry name" value="TrpB-like_PALP_sf"/>
</dbReference>
<dbReference type="NCBIfam" id="TIGR00260">
    <property type="entry name" value="thrC"/>
    <property type="match status" value="1"/>
</dbReference>
<dbReference type="PANTHER" id="PTHR43515">
    <property type="entry name" value="THREONINE SYNTHASE-LIKE 1"/>
    <property type="match status" value="1"/>
</dbReference>
<dbReference type="PANTHER" id="PTHR43515:SF1">
    <property type="entry name" value="THREONINE SYNTHASE-LIKE 1"/>
    <property type="match status" value="1"/>
</dbReference>
<dbReference type="Pfam" id="PF01202">
    <property type="entry name" value="SKI"/>
    <property type="match status" value="1"/>
</dbReference>
<dbReference type="Pfam" id="PF14821">
    <property type="entry name" value="Thr_synth_N"/>
    <property type="match status" value="1"/>
</dbReference>
<dbReference type="PRINTS" id="PR01100">
    <property type="entry name" value="SHIKIMTKNASE"/>
</dbReference>
<dbReference type="SUPFAM" id="SSF52540">
    <property type="entry name" value="P-loop containing nucleoside triphosphate hydrolases"/>
    <property type="match status" value="1"/>
</dbReference>
<dbReference type="SUPFAM" id="SSF53686">
    <property type="entry name" value="Tryptophan synthase beta subunit-like PLP-dependent enzymes"/>
    <property type="match status" value="1"/>
</dbReference>
<gene>
    <name type="primary">Thnsl1</name>
</gene>
<organism>
    <name type="scientific">Mus musculus</name>
    <name type="common">Mouse</name>
    <dbReference type="NCBI Taxonomy" id="10090"/>
    <lineage>
        <taxon>Eukaryota</taxon>
        <taxon>Metazoa</taxon>
        <taxon>Chordata</taxon>
        <taxon>Craniata</taxon>
        <taxon>Vertebrata</taxon>
        <taxon>Euteleostomi</taxon>
        <taxon>Mammalia</taxon>
        <taxon>Eutheria</taxon>
        <taxon>Euarchontoglires</taxon>
        <taxon>Glires</taxon>
        <taxon>Rodentia</taxon>
        <taxon>Myomorpha</taxon>
        <taxon>Muroidea</taxon>
        <taxon>Muridae</taxon>
        <taxon>Murinae</taxon>
        <taxon>Mus</taxon>
        <taxon>Mus</taxon>
    </lineage>
</organism>
<name>THNS1_MOUSE</name>
<accession>Q8BH55</accession>
<comment type="cofactor">
    <cofactor evidence="1">
        <name>pyridoxal 5'-phosphate</name>
        <dbReference type="ChEBI" id="CHEBI:597326"/>
    </cofactor>
</comment>
<comment type="similarity">
    <text evidence="2">Belongs to the threonine synthase family.</text>
</comment>
<evidence type="ECO:0000250" key="1"/>
<evidence type="ECO:0000305" key="2"/>
<feature type="chain" id="PRO_0000185648" description="Threonine synthase-like 1">
    <location>
        <begin position="1"/>
        <end position="747"/>
    </location>
</feature>
<feature type="modified residue" description="N6-(pyridoxal phosphate)lysine" evidence="1">
    <location>
        <position position="351"/>
    </location>
</feature>
<sequence>MLTLTRCHHLKQIAQECLSSLLVKVQSRTQLLLPRASARAESGKSWHSTHSLVGDKNIVLMGPPGSGKTTVGRILGDKLGCCVIDVDSDVLEKAWNMSASEKLQDVGNERFLEEEGKTVLNLSASGSVISLSGSNPMHDASMWHLKKNGIVVYLDVPLTDIISRLKSMRIDRIVGQNTGASLRDSLKHVRLYYKKWYDARVFCESGASAEEVADKVLDVVKRYQDVDSETFISTRHVCLKDHDKKFPPKYFSEAVVEGLASDGGLFVPEKEFPKLSPGEWNNLIGATYIERAQVLLERCIHPADIPAAKLGEMIETAYGENFACSKVAPVRHLSGNQFILELFYGPTGSFKDLSLQLMPHIFAYCIPPGCNYVILVATSGDTGSAVLNGFSHLNKNDKERIAVVTFFPENGVSDFQKAEIIGSQRENGWAIGVRSDFDFCQTAIRKIFNDSDFTGFLAVEYGTILSSANSINWARLLPQIVYHASAYLELVNQRFISFGSPVDVCVPTGNFGNVLAAVYAKMMGIPIRKFICASNQNHVLTDFIKTGHYDLRNRKLAQTFSPSIDILKSSNLERHLYLMANKDGQLMANLYHQLESQLHFRIEKMLVEKLQQEFVADWCSEGECLAAISTTYNASGYILDPHTAVAKVVADKMQDKSCPVLIASTAHYSKFAPAIMQALGIKELNQTSSSQLYLLSSYNALPPPHEALLERMKQKEKMDYQVCVADVDVLKSHAEKLIQNWFVRKSE</sequence>
<reference key="1">
    <citation type="journal article" date="2005" name="Science">
        <title>The transcriptional landscape of the mammalian genome.</title>
        <authorList>
            <person name="Carninci P."/>
            <person name="Kasukawa T."/>
            <person name="Katayama S."/>
            <person name="Gough J."/>
            <person name="Frith M.C."/>
            <person name="Maeda N."/>
            <person name="Oyama R."/>
            <person name="Ravasi T."/>
            <person name="Lenhard B."/>
            <person name="Wells C."/>
            <person name="Kodzius R."/>
            <person name="Shimokawa K."/>
            <person name="Bajic V.B."/>
            <person name="Brenner S.E."/>
            <person name="Batalov S."/>
            <person name="Forrest A.R."/>
            <person name="Zavolan M."/>
            <person name="Davis M.J."/>
            <person name="Wilming L.G."/>
            <person name="Aidinis V."/>
            <person name="Allen J.E."/>
            <person name="Ambesi-Impiombato A."/>
            <person name="Apweiler R."/>
            <person name="Aturaliya R.N."/>
            <person name="Bailey T.L."/>
            <person name="Bansal M."/>
            <person name="Baxter L."/>
            <person name="Beisel K.W."/>
            <person name="Bersano T."/>
            <person name="Bono H."/>
            <person name="Chalk A.M."/>
            <person name="Chiu K.P."/>
            <person name="Choudhary V."/>
            <person name="Christoffels A."/>
            <person name="Clutterbuck D.R."/>
            <person name="Crowe M.L."/>
            <person name="Dalla E."/>
            <person name="Dalrymple B.P."/>
            <person name="de Bono B."/>
            <person name="Della Gatta G."/>
            <person name="di Bernardo D."/>
            <person name="Down T."/>
            <person name="Engstrom P."/>
            <person name="Fagiolini M."/>
            <person name="Faulkner G."/>
            <person name="Fletcher C.F."/>
            <person name="Fukushima T."/>
            <person name="Furuno M."/>
            <person name="Futaki S."/>
            <person name="Gariboldi M."/>
            <person name="Georgii-Hemming P."/>
            <person name="Gingeras T.R."/>
            <person name="Gojobori T."/>
            <person name="Green R.E."/>
            <person name="Gustincich S."/>
            <person name="Harbers M."/>
            <person name="Hayashi Y."/>
            <person name="Hensch T.K."/>
            <person name="Hirokawa N."/>
            <person name="Hill D."/>
            <person name="Huminiecki L."/>
            <person name="Iacono M."/>
            <person name="Ikeo K."/>
            <person name="Iwama A."/>
            <person name="Ishikawa T."/>
            <person name="Jakt M."/>
            <person name="Kanapin A."/>
            <person name="Katoh M."/>
            <person name="Kawasawa Y."/>
            <person name="Kelso J."/>
            <person name="Kitamura H."/>
            <person name="Kitano H."/>
            <person name="Kollias G."/>
            <person name="Krishnan S.P."/>
            <person name="Kruger A."/>
            <person name="Kummerfeld S.K."/>
            <person name="Kurochkin I.V."/>
            <person name="Lareau L.F."/>
            <person name="Lazarevic D."/>
            <person name="Lipovich L."/>
            <person name="Liu J."/>
            <person name="Liuni S."/>
            <person name="McWilliam S."/>
            <person name="Madan Babu M."/>
            <person name="Madera M."/>
            <person name="Marchionni L."/>
            <person name="Matsuda H."/>
            <person name="Matsuzawa S."/>
            <person name="Miki H."/>
            <person name="Mignone F."/>
            <person name="Miyake S."/>
            <person name="Morris K."/>
            <person name="Mottagui-Tabar S."/>
            <person name="Mulder N."/>
            <person name="Nakano N."/>
            <person name="Nakauchi H."/>
            <person name="Ng P."/>
            <person name="Nilsson R."/>
            <person name="Nishiguchi S."/>
            <person name="Nishikawa S."/>
            <person name="Nori F."/>
            <person name="Ohara O."/>
            <person name="Okazaki Y."/>
            <person name="Orlando V."/>
            <person name="Pang K.C."/>
            <person name="Pavan W.J."/>
            <person name="Pavesi G."/>
            <person name="Pesole G."/>
            <person name="Petrovsky N."/>
            <person name="Piazza S."/>
            <person name="Reed J."/>
            <person name="Reid J.F."/>
            <person name="Ring B.Z."/>
            <person name="Ringwald M."/>
            <person name="Rost B."/>
            <person name="Ruan Y."/>
            <person name="Salzberg S.L."/>
            <person name="Sandelin A."/>
            <person name="Schneider C."/>
            <person name="Schoenbach C."/>
            <person name="Sekiguchi K."/>
            <person name="Semple C.A."/>
            <person name="Seno S."/>
            <person name="Sessa L."/>
            <person name="Sheng Y."/>
            <person name="Shibata Y."/>
            <person name="Shimada H."/>
            <person name="Shimada K."/>
            <person name="Silva D."/>
            <person name="Sinclair B."/>
            <person name="Sperling S."/>
            <person name="Stupka E."/>
            <person name="Sugiura K."/>
            <person name="Sultana R."/>
            <person name="Takenaka Y."/>
            <person name="Taki K."/>
            <person name="Tammoja K."/>
            <person name="Tan S.L."/>
            <person name="Tang S."/>
            <person name="Taylor M.S."/>
            <person name="Tegner J."/>
            <person name="Teichmann S.A."/>
            <person name="Ueda H.R."/>
            <person name="van Nimwegen E."/>
            <person name="Verardo R."/>
            <person name="Wei C.L."/>
            <person name="Yagi K."/>
            <person name="Yamanishi H."/>
            <person name="Zabarovsky E."/>
            <person name="Zhu S."/>
            <person name="Zimmer A."/>
            <person name="Hide W."/>
            <person name="Bult C."/>
            <person name="Grimmond S.M."/>
            <person name="Teasdale R.D."/>
            <person name="Liu E.T."/>
            <person name="Brusic V."/>
            <person name="Quackenbush J."/>
            <person name="Wahlestedt C."/>
            <person name="Mattick J.S."/>
            <person name="Hume D.A."/>
            <person name="Kai C."/>
            <person name="Sasaki D."/>
            <person name="Tomaru Y."/>
            <person name="Fukuda S."/>
            <person name="Kanamori-Katayama M."/>
            <person name="Suzuki M."/>
            <person name="Aoki J."/>
            <person name="Arakawa T."/>
            <person name="Iida J."/>
            <person name="Imamura K."/>
            <person name="Itoh M."/>
            <person name="Kato T."/>
            <person name="Kawaji H."/>
            <person name="Kawagashira N."/>
            <person name="Kawashima T."/>
            <person name="Kojima M."/>
            <person name="Kondo S."/>
            <person name="Konno H."/>
            <person name="Nakano K."/>
            <person name="Ninomiya N."/>
            <person name="Nishio T."/>
            <person name="Okada M."/>
            <person name="Plessy C."/>
            <person name="Shibata K."/>
            <person name="Shiraki T."/>
            <person name="Suzuki S."/>
            <person name="Tagami M."/>
            <person name="Waki K."/>
            <person name="Watahiki A."/>
            <person name="Okamura-Oho Y."/>
            <person name="Suzuki H."/>
            <person name="Kawai J."/>
            <person name="Hayashizaki Y."/>
        </authorList>
    </citation>
    <scope>NUCLEOTIDE SEQUENCE [LARGE SCALE MRNA]</scope>
    <source>
        <strain>C57BL/6J</strain>
        <tissue>Spinal ganglion</tissue>
        <tissue>Testis</tissue>
    </source>
</reference>
<reference key="2">
    <citation type="journal article" date="2010" name="Cell">
        <title>A tissue-specific atlas of mouse protein phosphorylation and expression.</title>
        <authorList>
            <person name="Huttlin E.L."/>
            <person name="Jedrychowski M.P."/>
            <person name="Elias J.E."/>
            <person name="Goswami T."/>
            <person name="Rad R."/>
            <person name="Beausoleil S.A."/>
            <person name="Villen J."/>
            <person name="Haas W."/>
            <person name="Sowa M.E."/>
            <person name="Gygi S.P."/>
        </authorList>
    </citation>
    <scope>IDENTIFICATION BY MASS SPECTROMETRY [LARGE SCALE ANALYSIS]</scope>
    <source>
        <tissue>Brain</tissue>
        <tissue>Brown adipose tissue</tissue>
        <tissue>Kidney</tissue>
        <tissue>Liver</tissue>
        <tissue>Testis</tissue>
    </source>
</reference>
<protein>
    <recommendedName>
        <fullName>Threonine synthase-like 1</fullName>
        <shortName>TSH1</shortName>
    </recommendedName>
</protein>
<proteinExistence type="evidence at protein level"/>